<reference key="1">
    <citation type="journal article" date="2009" name="Genome Res.">
        <title>Comparative genomic analyses of the human fungal pathogens Coccidioides and their relatives.</title>
        <authorList>
            <person name="Sharpton T.J."/>
            <person name="Stajich J.E."/>
            <person name="Rounsley S.D."/>
            <person name="Gardner M.J."/>
            <person name="Wortman J.R."/>
            <person name="Jordar V.S."/>
            <person name="Maiti R."/>
            <person name="Kodira C.D."/>
            <person name="Neafsey D.E."/>
            <person name="Zeng Q."/>
            <person name="Hung C.-Y."/>
            <person name="McMahan C."/>
            <person name="Muszewska A."/>
            <person name="Grynberg M."/>
            <person name="Mandel M.A."/>
            <person name="Kellner E.M."/>
            <person name="Barker B.M."/>
            <person name="Galgiani J.N."/>
            <person name="Orbach M.J."/>
            <person name="Kirkland T.N."/>
            <person name="Cole G.T."/>
            <person name="Henn M.R."/>
            <person name="Birren B.W."/>
            <person name="Taylor J.W."/>
        </authorList>
    </citation>
    <scope>NUCLEOTIDE SEQUENCE [LARGE SCALE GENOMIC DNA]</scope>
    <source>
        <strain>RS</strain>
    </source>
</reference>
<reference key="2">
    <citation type="journal article" date="2010" name="Genome Res.">
        <title>Population genomic sequencing of Coccidioides fungi reveals recent hybridization and transposon control.</title>
        <authorList>
            <person name="Neafsey D.E."/>
            <person name="Barker B.M."/>
            <person name="Sharpton T.J."/>
            <person name="Stajich J.E."/>
            <person name="Park D.J."/>
            <person name="Whiston E."/>
            <person name="Hung C.-Y."/>
            <person name="McMahan C."/>
            <person name="White J."/>
            <person name="Sykes S."/>
            <person name="Heiman D."/>
            <person name="Young S."/>
            <person name="Zeng Q."/>
            <person name="Abouelleil A."/>
            <person name="Aftuck L."/>
            <person name="Bessette D."/>
            <person name="Brown A."/>
            <person name="FitzGerald M."/>
            <person name="Lui A."/>
            <person name="Macdonald J.P."/>
            <person name="Priest M."/>
            <person name="Orbach M.J."/>
            <person name="Galgiani J.N."/>
            <person name="Kirkland T.N."/>
            <person name="Cole G.T."/>
            <person name="Birren B.W."/>
            <person name="Henn M.R."/>
            <person name="Taylor J.W."/>
            <person name="Rounsley S.D."/>
        </authorList>
    </citation>
    <scope>GENOME REANNOTATION</scope>
    <source>
        <strain>RS</strain>
    </source>
</reference>
<comment type="function">
    <text evidence="1">Catalyzes the oxidative ring opening of 3-hydroxyanthranilate to 2-amino-3-carboxymuconate semialdehyde, which spontaneously cyclizes to quinolinate.</text>
</comment>
<comment type="catalytic activity">
    <reaction evidence="1">
        <text>3-hydroxyanthranilate + O2 = (2Z,4Z)-2-amino-3-carboxymuconate 6-semialdehyde</text>
        <dbReference type="Rhea" id="RHEA:17953"/>
        <dbReference type="ChEBI" id="CHEBI:15379"/>
        <dbReference type="ChEBI" id="CHEBI:36559"/>
        <dbReference type="ChEBI" id="CHEBI:77612"/>
        <dbReference type="EC" id="1.13.11.6"/>
    </reaction>
</comment>
<comment type="cofactor">
    <cofactor evidence="1">
        <name>Fe(2+)</name>
        <dbReference type="ChEBI" id="CHEBI:29033"/>
    </cofactor>
</comment>
<comment type="pathway">
    <text evidence="1">Cofactor biosynthesis; NAD(+) biosynthesis; quinolinate from L-kynurenine: step 3/3.</text>
</comment>
<comment type="subcellular location">
    <subcellularLocation>
        <location evidence="1">Cytoplasm</location>
    </subcellularLocation>
</comment>
<comment type="similarity">
    <text evidence="1">Belongs to the 3-HAO family.</text>
</comment>
<protein>
    <recommendedName>
        <fullName evidence="1">3-hydroxyanthranilate 3,4-dioxygenase</fullName>
        <ecNumber evidence="1">1.13.11.6</ecNumber>
    </recommendedName>
    <alternativeName>
        <fullName evidence="1">3-hydroxyanthranilate oxygenase</fullName>
        <shortName evidence="1">3-HAO</shortName>
    </alternativeName>
    <alternativeName>
        <fullName evidence="1">3-hydroxyanthranilic acid dioxygenase</fullName>
        <shortName evidence="1">HAD</shortName>
    </alternativeName>
    <alternativeName>
        <fullName evidence="1">Biosynthesis of nicotinic acid protein 1</fullName>
    </alternativeName>
</protein>
<name>3HAO_COCIM</name>
<feature type="chain" id="PRO_0000361986" description="3-hydroxyanthranilate 3,4-dioxygenase">
    <location>
        <begin position="1"/>
        <end position="192"/>
    </location>
</feature>
<feature type="binding site" evidence="1">
    <location>
        <position position="50"/>
    </location>
    <ligand>
        <name>O2</name>
        <dbReference type="ChEBI" id="CHEBI:15379"/>
    </ligand>
</feature>
<feature type="binding site" evidence="1">
    <location>
        <position position="54"/>
    </location>
    <ligand>
        <name>Fe cation</name>
        <dbReference type="ChEBI" id="CHEBI:24875"/>
        <note>catalytic</note>
    </ligand>
</feature>
<feature type="binding site" evidence="1">
    <location>
        <position position="60"/>
    </location>
    <ligand>
        <name>Fe cation</name>
        <dbReference type="ChEBI" id="CHEBI:24875"/>
        <note>catalytic</note>
    </ligand>
</feature>
<feature type="binding site" evidence="1">
    <location>
        <position position="60"/>
    </location>
    <ligand>
        <name>substrate</name>
    </ligand>
</feature>
<feature type="binding site" evidence="1">
    <location>
        <position position="102"/>
    </location>
    <ligand>
        <name>Fe cation</name>
        <dbReference type="ChEBI" id="CHEBI:24875"/>
        <note>catalytic</note>
    </ligand>
</feature>
<feature type="binding site" evidence="1">
    <location>
        <position position="106"/>
    </location>
    <ligand>
        <name>substrate</name>
    </ligand>
</feature>
<feature type="binding site" evidence="1">
    <location>
        <position position="116"/>
    </location>
    <ligand>
        <name>substrate</name>
    </ligand>
</feature>
<feature type="binding site" evidence="1">
    <location>
        <position position="131"/>
    </location>
    <ligand>
        <name>a divalent metal cation</name>
        <dbReference type="ChEBI" id="CHEBI:60240"/>
    </ligand>
</feature>
<feature type="binding site" evidence="1">
    <location>
        <position position="134"/>
    </location>
    <ligand>
        <name>a divalent metal cation</name>
        <dbReference type="ChEBI" id="CHEBI:60240"/>
    </ligand>
</feature>
<feature type="binding site" evidence="1">
    <location>
        <position position="168"/>
    </location>
    <ligand>
        <name>a divalent metal cation</name>
        <dbReference type="ChEBI" id="CHEBI:60240"/>
    </ligand>
</feature>
<feature type="binding site" evidence="1">
    <location>
        <position position="171"/>
    </location>
    <ligand>
        <name>a divalent metal cation</name>
        <dbReference type="ChEBI" id="CHEBI:60240"/>
    </ligand>
</feature>
<accession>Q1E5I0</accession>
<accession>A0A0D6K9Q5</accession>
<accession>J3KL46</accession>
<sequence length="192" mass="21611">MLAPALNLPKWLEENSHLLQPPINNYCVYHPSAPATQGYTVMVVGGPNVRTDYHINPTPEFFYQHRGSMLLRTVDQSTSPPTFQDIPIHEGSLFLLPANTPHCPVRFADTVGVVLEVPRPENATDCMRWYCKGCGEIVWEKKFHCTDLGTQVKEVVEEFAADDEKRKCKACGSVRSVRYEDGEVVQPPRAPE</sequence>
<proteinExistence type="inferred from homology"/>
<keyword id="KW-0963">Cytoplasm</keyword>
<keyword id="KW-0223">Dioxygenase</keyword>
<keyword id="KW-0408">Iron</keyword>
<keyword id="KW-0479">Metal-binding</keyword>
<keyword id="KW-0560">Oxidoreductase</keyword>
<keyword id="KW-0662">Pyridine nucleotide biosynthesis</keyword>
<keyword id="KW-1185">Reference proteome</keyword>
<organism>
    <name type="scientific">Coccidioides immitis (strain RS)</name>
    <name type="common">Valley fever fungus</name>
    <dbReference type="NCBI Taxonomy" id="246410"/>
    <lineage>
        <taxon>Eukaryota</taxon>
        <taxon>Fungi</taxon>
        <taxon>Dikarya</taxon>
        <taxon>Ascomycota</taxon>
        <taxon>Pezizomycotina</taxon>
        <taxon>Eurotiomycetes</taxon>
        <taxon>Eurotiomycetidae</taxon>
        <taxon>Onygenales</taxon>
        <taxon>Onygenaceae</taxon>
        <taxon>Coccidioides</taxon>
    </lineage>
</organism>
<gene>
    <name evidence="1" type="primary">BNA1</name>
    <name type="ORF">CIMG_02183</name>
</gene>
<evidence type="ECO:0000255" key="1">
    <source>
        <dbReference type="HAMAP-Rule" id="MF_03019"/>
    </source>
</evidence>
<dbReference type="EC" id="1.13.11.6" evidence="1"/>
<dbReference type="EMBL" id="GG704911">
    <property type="protein sequence ID" value="EAS36829.1"/>
    <property type="molecule type" value="Genomic_DNA"/>
</dbReference>
<dbReference type="RefSeq" id="XP_001248412.1">
    <property type="nucleotide sequence ID" value="XM_001248411.2"/>
</dbReference>
<dbReference type="SMR" id="Q1E5I0"/>
<dbReference type="FunCoup" id="Q1E5I0">
    <property type="interactions" value="142"/>
</dbReference>
<dbReference type="STRING" id="246410.Q1E5I0"/>
<dbReference type="GeneID" id="4567554"/>
<dbReference type="KEGG" id="cim:CIMG_02183"/>
<dbReference type="VEuPathDB" id="FungiDB:CIMG_02183"/>
<dbReference type="InParanoid" id="Q1E5I0"/>
<dbReference type="OMA" id="KPPVGNQ"/>
<dbReference type="OrthoDB" id="204928at2759"/>
<dbReference type="UniPathway" id="UPA00253">
    <property type="reaction ID" value="UER00330"/>
</dbReference>
<dbReference type="Proteomes" id="UP000001261">
    <property type="component" value="Unassembled WGS sequence"/>
</dbReference>
<dbReference type="GO" id="GO:0005737">
    <property type="term" value="C:cytoplasm"/>
    <property type="evidence" value="ECO:0007669"/>
    <property type="project" value="UniProtKB-SubCell"/>
</dbReference>
<dbReference type="GO" id="GO:0000334">
    <property type="term" value="F:3-hydroxyanthranilate 3,4-dioxygenase activity"/>
    <property type="evidence" value="ECO:0007669"/>
    <property type="project" value="UniProtKB-UniRule"/>
</dbReference>
<dbReference type="GO" id="GO:0008198">
    <property type="term" value="F:ferrous iron binding"/>
    <property type="evidence" value="ECO:0007669"/>
    <property type="project" value="UniProtKB-UniRule"/>
</dbReference>
<dbReference type="GO" id="GO:0034354">
    <property type="term" value="P:'de novo' NAD biosynthetic process from L-tryptophan"/>
    <property type="evidence" value="ECO:0007669"/>
    <property type="project" value="UniProtKB-UniRule"/>
</dbReference>
<dbReference type="GO" id="GO:0043420">
    <property type="term" value="P:anthranilate metabolic process"/>
    <property type="evidence" value="ECO:0007669"/>
    <property type="project" value="UniProtKB-UniRule"/>
</dbReference>
<dbReference type="GO" id="GO:0006569">
    <property type="term" value="P:L-tryptophan catabolic process"/>
    <property type="evidence" value="ECO:0007669"/>
    <property type="project" value="UniProtKB-UniRule"/>
</dbReference>
<dbReference type="GO" id="GO:0019805">
    <property type="term" value="P:quinolinate biosynthetic process"/>
    <property type="evidence" value="ECO:0007669"/>
    <property type="project" value="UniProtKB-UniRule"/>
</dbReference>
<dbReference type="CDD" id="cd06123">
    <property type="entry name" value="cupin_HAO"/>
    <property type="match status" value="1"/>
</dbReference>
<dbReference type="FunFam" id="2.60.120.10:FF:000093">
    <property type="entry name" value="3-hydroxyanthranilate 3,4-dioxygenase"/>
    <property type="match status" value="1"/>
</dbReference>
<dbReference type="Gene3D" id="2.60.120.10">
    <property type="entry name" value="Jelly Rolls"/>
    <property type="match status" value="1"/>
</dbReference>
<dbReference type="HAMAP" id="MF_00825">
    <property type="entry name" value="3_HAO"/>
    <property type="match status" value="1"/>
</dbReference>
<dbReference type="InterPro" id="IPR010329">
    <property type="entry name" value="3hydroanth_dOase"/>
</dbReference>
<dbReference type="InterPro" id="IPR014710">
    <property type="entry name" value="RmlC-like_jellyroll"/>
</dbReference>
<dbReference type="InterPro" id="IPR011051">
    <property type="entry name" value="RmlC_Cupin_sf"/>
</dbReference>
<dbReference type="NCBIfam" id="TIGR03037">
    <property type="entry name" value="anthran_nbaC"/>
    <property type="match status" value="1"/>
</dbReference>
<dbReference type="PANTHER" id="PTHR15497">
    <property type="entry name" value="3-HYDROXYANTHRANILATE 3,4-DIOXYGENASE"/>
    <property type="match status" value="1"/>
</dbReference>
<dbReference type="PANTHER" id="PTHR15497:SF1">
    <property type="entry name" value="3-HYDROXYANTHRANILATE 3,4-DIOXYGENASE"/>
    <property type="match status" value="1"/>
</dbReference>
<dbReference type="Pfam" id="PF06052">
    <property type="entry name" value="3-HAO"/>
    <property type="match status" value="1"/>
</dbReference>
<dbReference type="SUPFAM" id="SSF51182">
    <property type="entry name" value="RmlC-like cupins"/>
    <property type="match status" value="1"/>
</dbReference>